<reference key="1">
    <citation type="submission" date="2009-02" db="EMBL/GenBank/DDBJ databases">
        <title>The genome sequence of Ajellomyces capsulatus strain G186AR.</title>
        <authorList>
            <person name="Champion M."/>
            <person name="Cuomo C.A."/>
            <person name="Ma L.-J."/>
            <person name="Henn M.R."/>
            <person name="Sil A."/>
            <person name="Goldman B."/>
            <person name="Young S.K."/>
            <person name="Kodira C.D."/>
            <person name="Zeng Q."/>
            <person name="Koehrsen M."/>
            <person name="Alvarado L."/>
            <person name="Berlin A."/>
            <person name="Borenstein D."/>
            <person name="Chen Z."/>
            <person name="Engels R."/>
            <person name="Freedman E."/>
            <person name="Gellesch M."/>
            <person name="Goldberg J."/>
            <person name="Griggs A."/>
            <person name="Gujja S."/>
            <person name="Heiman D."/>
            <person name="Hepburn T."/>
            <person name="Howarth C."/>
            <person name="Jen D."/>
            <person name="Larson L."/>
            <person name="Lewis B."/>
            <person name="Mehta T."/>
            <person name="Park D."/>
            <person name="Pearson M."/>
            <person name="Roberts A."/>
            <person name="Saif S."/>
            <person name="Shea T."/>
            <person name="Shenoy N."/>
            <person name="Sisk P."/>
            <person name="Stolte C."/>
            <person name="Sykes S."/>
            <person name="Walk T."/>
            <person name="White J."/>
            <person name="Yandava C."/>
            <person name="Klein B."/>
            <person name="McEwen J.G."/>
            <person name="Puccia R."/>
            <person name="Goldman G.H."/>
            <person name="Felipe M.S."/>
            <person name="Nino-Vega G."/>
            <person name="San-Blas G."/>
            <person name="Taylor J."/>
            <person name="Mendoza L."/>
            <person name="Galagan J.E."/>
            <person name="Nusbaum C."/>
            <person name="Birren B.W."/>
        </authorList>
    </citation>
    <scope>NUCLEOTIDE SEQUENCE [LARGE SCALE GENOMIC DNA]</scope>
    <source>
        <strain>G186AR / H82 / ATCC MYA-2454 / RMSCC 2432</strain>
    </source>
</reference>
<name>SEC11_AJECG</name>
<comment type="function">
    <text evidence="1 2">Catalytic component of the signal peptidase complex (SPC) which catalyzes the cleavage of N-terminal signal sequences from nascent proteins as they are translocated into the lumen of the endoplasmic reticulum (By similarity). Specifically cleaves N-terminal signal peptides that contain a hydrophobic alpha-helix (h-region) shorter than 18-20 amino acids (By similarity).</text>
</comment>
<comment type="catalytic activity">
    <reaction evidence="1">
        <text>Cleavage of hydrophobic, N-terminal signal or leader sequences from secreted and periplasmic proteins.</text>
        <dbReference type="EC" id="3.4.21.89"/>
    </reaction>
</comment>
<comment type="subunit">
    <text evidence="1 2">Component of the signal peptidase complex (SPC) composed of a catalytic subunit SEC11 and three accessory subunits SPC1, SPC2 and SPC3 (By similarity). The complex induces a local thinning of the ER membrane which is used to measure the length of the signal peptide (SP) h-region of protein substrates. This ensures the selectivity of the complex towards h-regions shorter than 18-20 amino acids (By similarity). SPC associates with the translocon complex (By similarity).</text>
</comment>
<comment type="subcellular location">
    <subcellularLocation>
        <location evidence="1">Endoplasmic reticulum membrane</location>
        <topology evidence="1">Single-pass type II membrane protein</topology>
    </subcellularLocation>
</comment>
<comment type="domain">
    <text evidence="2">The C-terminal short (CTS) helix is essential for catalytic activity. It may be accommodated as a transmembrane helix in the thinned membrane environment of the complex, similarly to the signal peptide in the complex substrates.</text>
</comment>
<comment type="similarity">
    <text evidence="4">Belongs to the peptidase S26B family.</text>
</comment>
<organism>
    <name type="scientific">Ajellomyces capsulatus (strain G186AR / H82 / ATCC MYA-2454 / RMSCC 2432)</name>
    <name type="common">Darling's disease fungus</name>
    <name type="synonym">Histoplasma capsulatum</name>
    <dbReference type="NCBI Taxonomy" id="447093"/>
    <lineage>
        <taxon>Eukaryota</taxon>
        <taxon>Fungi</taxon>
        <taxon>Dikarya</taxon>
        <taxon>Ascomycota</taxon>
        <taxon>Pezizomycotina</taxon>
        <taxon>Eurotiomycetes</taxon>
        <taxon>Eurotiomycetidae</taxon>
        <taxon>Onygenales</taxon>
        <taxon>Ajellomycetaceae</taxon>
        <taxon>Histoplasma</taxon>
    </lineage>
</organism>
<protein>
    <recommendedName>
        <fullName>Signal peptidase complex catalytic subunit SEC11</fullName>
        <ecNumber evidence="1">3.4.21.89</ecNumber>
    </recommendedName>
    <alternativeName>
        <fullName>Signal peptidase I</fullName>
    </alternativeName>
</protein>
<sequence length="187" mass="20621">MLSSLSPYMANPRNTLSQVLNFGLVLSSAFMVWKALSVITNSASPVVVVLSGSMEPAFQRGDLLFLWNRSPRVDVGEIVVYNVQGKDIPIVHRVMRVFPDVPTTGGEDVEGVEASQKLLTKGDNNLSDDTELYAPGQEFLDRKTDLMGSVRGYVPAIGYVTIMLSEHPWLKSVLLGFMGLMVMLQRE</sequence>
<evidence type="ECO:0000250" key="1">
    <source>
        <dbReference type="UniProtKB" id="P15367"/>
    </source>
</evidence>
<evidence type="ECO:0000250" key="2">
    <source>
        <dbReference type="UniProtKB" id="P67812"/>
    </source>
</evidence>
<evidence type="ECO:0000255" key="3"/>
<evidence type="ECO:0000305" key="4"/>
<keyword id="KW-0256">Endoplasmic reticulum</keyword>
<keyword id="KW-0325">Glycoprotein</keyword>
<keyword id="KW-0378">Hydrolase</keyword>
<keyword id="KW-0472">Membrane</keyword>
<keyword id="KW-0645">Protease</keyword>
<keyword id="KW-1185">Reference proteome</keyword>
<keyword id="KW-0735">Signal-anchor</keyword>
<keyword id="KW-0812">Transmembrane</keyword>
<keyword id="KW-1133">Transmembrane helix</keyword>
<dbReference type="EC" id="3.4.21.89" evidence="1"/>
<dbReference type="EMBL" id="GG663366">
    <property type="protein sequence ID" value="EEH08479.1"/>
    <property type="molecule type" value="Genomic_DNA"/>
</dbReference>
<dbReference type="SMR" id="C0NKT8"/>
<dbReference type="FunCoup" id="C0NKT8">
    <property type="interactions" value="620"/>
</dbReference>
<dbReference type="STRING" id="447093.C0NKT8"/>
<dbReference type="GlyCosmos" id="C0NKT8">
    <property type="glycosylation" value="1 site, No reported glycans"/>
</dbReference>
<dbReference type="HOGENOM" id="CLU_089996_0_0_1"/>
<dbReference type="InParanoid" id="C0NKT8"/>
<dbReference type="Proteomes" id="UP000001631">
    <property type="component" value="Unassembled WGS sequence"/>
</dbReference>
<dbReference type="GO" id="GO:0005787">
    <property type="term" value="C:signal peptidase complex"/>
    <property type="evidence" value="ECO:0007669"/>
    <property type="project" value="TreeGrafter"/>
</dbReference>
<dbReference type="GO" id="GO:0004252">
    <property type="term" value="F:serine-type endopeptidase activity"/>
    <property type="evidence" value="ECO:0007669"/>
    <property type="project" value="UniProtKB-EC"/>
</dbReference>
<dbReference type="GO" id="GO:0006465">
    <property type="term" value="P:signal peptide processing"/>
    <property type="evidence" value="ECO:0007669"/>
    <property type="project" value="InterPro"/>
</dbReference>
<dbReference type="CDD" id="cd06530">
    <property type="entry name" value="S26_SPase_I"/>
    <property type="match status" value="1"/>
</dbReference>
<dbReference type="InterPro" id="IPR036286">
    <property type="entry name" value="LexA/Signal_pep-like_sf"/>
</dbReference>
<dbReference type="InterPro" id="IPR019756">
    <property type="entry name" value="Pept_S26A_signal_pept_1_Ser-AS"/>
</dbReference>
<dbReference type="InterPro" id="IPR019533">
    <property type="entry name" value="Peptidase_S26"/>
</dbReference>
<dbReference type="InterPro" id="IPR001733">
    <property type="entry name" value="Peptidase_S26B"/>
</dbReference>
<dbReference type="NCBIfam" id="TIGR02228">
    <property type="entry name" value="sigpep_I_arch"/>
    <property type="match status" value="1"/>
</dbReference>
<dbReference type="PANTHER" id="PTHR10806">
    <property type="entry name" value="SIGNAL PEPTIDASE COMPLEX CATALYTIC SUBUNIT SEC11"/>
    <property type="match status" value="1"/>
</dbReference>
<dbReference type="PANTHER" id="PTHR10806:SF6">
    <property type="entry name" value="SIGNAL PEPTIDASE COMPLEX CATALYTIC SUBUNIT SEC11"/>
    <property type="match status" value="1"/>
</dbReference>
<dbReference type="PRINTS" id="PR00728">
    <property type="entry name" value="SIGNALPTASE"/>
</dbReference>
<dbReference type="SUPFAM" id="SSF51306">
    <property type="entry name" value="LexA/Signal peptidase"/>
    <property type="match status" value="1"/>
</dbReference>
<dbReference type="PROSITE" id="PS00501">
    <property type="entry name" value="SPASE_I_1"/>
    <property type="match status" value="1"/>
</dbReference>
<accession>C0NKT8</accession>
<feature type="chain" id="PRO_0000412306" description="Signal peptidase complex catalytic subunit SEC11">
    <location>
        <begin position="1"/>
        <end position="187"/>
    </location>
</feature>
<feature type="topological domain" description="Cytoplasmic" evidence="3">
    <location>
        <begin position="1"/>
        <end position="18"/>
    </location>
</feature>
<feature type="transmembrane region" description="Helical; Signal-anchor for type II membrane protein" evidence="3">
    <location>
        <begin position="19"/>
        <end position="39"/>
    </location>
</feature>
<feature type="topological domain" description="Lumenal" evidence="3">
    <location>
        <begin position="40"/>
        <end position="187"/>
    </location>
</feature>
<feature type="region of interest" description="C-terminal short (CTS) helix" evidence="2">
    <location>
        <begin position="173"/>
        <end position="184"/>
    </location>
</feature>
<feature type="active site" description="Charge relay system" evidence="1">
    <location>
        <position position="53"/>
    </location>
</feature>
<feature type="active site" description="Charge relay system" evidence="1">
    <location>
        <position position="92"/>
    </location>
</feature>
<feature type="active site" description="Charge relay system" evidence="1">
    <location>
        <position position="129"/>
    </location>
</feature>
<feature type="glycosylation site" description="N-linked (GlcNAc...) asparagine" evidence="3">
    <location>
        <position position="125"/>
    </location>
</feature>
<gene>
    <name type="primary">SEC11</name>
    <name type="ORF">HCBG_03768</name>
</gene>
<proteinExistence type="inferred from homology"/>